<dbReference type="EC" id="3.6.1.-" evidence="1"/>
<dbReference type="EMBL" id="AM889285">
    <property type="protein sequence ID" value="CAP57293.1"/>
    <property type="molecule type" value="Genomic_DNA"/>
</dbReference>
<dbReference type="EMBL" id="CP001189">
    <property type="protein sequence ID" value="ACI52750.1"/>
    <property type="molecule type" value="Genomic_DNA"/>
</dbReference>
<dbReference type="RefSeq" id="WP_012227855.1">
    <property type="nucleotide sequence ID" value="NC_010125.1"/>
</dbReference>
<dbReference type="RefSeq" id="WP_012554709.1">
    <property type="nucleotide sequence ID" value="NC_011365.1"/>
</dbReference>
<dbReference type="SMR" id="A9H3A6"/>
<dbReference type="STRING" id="272568.GDI3350"/>
<dbReference type="KEGG" id="gdi:GDI3350"/>
<dbReference type="KEGG" id="gdj:Gdia_3020"/>
<dbReference type="eggNOG" id="COG1051">
    <property type="taxonomic scope" value="Bacteria"/>
</dbReference>
<dbReference type="HOGENOM" id="CLU_087195_3_0_5"/>
<dbReference type="OrthoDB" id="9816040at2"/>
<dbReference type="Proteomes" id="UP000001176">
    <property type="component" value="Chromosome"/>
</dbReference>
<dbReference type="GO" id="GO:0034432">
    <property type="term" value="F:bis(5'-adenosyl)-pentaphosphatase activity"/>
    <property type="evidence" value="ECO:0007669"/>
    <property type="project" value="TreeGrafter"/>
</dbReference>
<dbReference type="GO" id="GO:0008893">
    <property type="term" value="F:guanosine-3',5'-bis(diphosphate) 3'-diphosphatase activity"/>
    <property type="evidence" value="ECO:0007669"/>
    <property type="project" value="TreeGrafter"/>
</dbReference>
<dbReference type="GO" id="GO:0006753">
    <property type="term" value="P:nucleoside phosphate metabolic process"/>
    <property type="evidence" value="ECO:0007669"/>
    <property type="project" value="TreeGrafter"/>
</dbReference>
<dbReference type="GO" id="GO:0019693">
    <property type="term" value="P:ribose phosphate metabolic process"/>
    <property type="evidence" value="ECO:0007669"/>
    <property type="project" value="TreeGrafter"/>
</dbReference>
<dbReference type="CDD" id="cd03671">
    <property type="entry name" value="NUDIX_Ap4A_hydrolase_plant_like"/>
    <property type="match status" value="1"/>
</dbReference>
<dbReference type="Gene3D" id="3.90.79.10">
    <property type="entry name" value="Nucleoside Triphosphate Pyrophosphohydrolase"/>
    <property type="match status" value="1"/>
</dbReference>
<dbReference type="HAMAP" id="MF_00298">
    <property type="entry name" value="Nudix_RppH"/>
    <property type="match status" value="1"/>
</dbReference>
<dbReference type="InterPro" id="IPR020476">
    <property type="entry name" value="Nudix_hydrolase"/>
</dbReference>
<dbReference type="InterPro" id="IPR015797">
    <property type="entry name" value="NUDIX_hydrolase-like_dom_sf"/>
</dbReference>
<dbReference type="InterPro" id="IPR020084">
    <property type="entry name" value="NUDIX_hydrolase_CS"/>
</dbReference>
<dbReference type="InterPro" id="IPR000086">
    <property type="entry name" value="NUDIX_hydrolase_dom"/>
</dbReference>
<dbReference type="InterPro" id="IPR022927">
    <property type="entry name" value="RppH"/>
</dbReference>
<dbReference type="NCBIfam" id="NF001938">
    <property type="entry name" value="PRK00714.1-5"/>
    <property type="match status" value="1"/>
</dbReference>
<dbReference type="PANTHER" id="PTHR11839:SF22">
    <property type="entry name" value="NUDIX HYDROLASE 26, CHLOROPLASTIC"/>
    <property type="match status" value="1"/>
</dbReference>
<dbReference type="PANTHER" id="PTHR11839">
    <property type="entry name" value="UDP/ADP-SUGAR PYROPHOSPHATASE"/>
    <property type="match status" value="1"/>
</dbReference>
<dbReference type="Pfam" id="PF00293">
    <property type="entry name" value="NUDIX"/>
    <property type="match status" value="1"/>
</dbReference>
<dbReference type="PRINTS" id="PR00502">
    <property type="entry name" value="NUDIXFAMILY"/>
</dbReference>
<dbReference type="SUPFAM" id="SSF55811">
    <property type="entry name" value="Nudix"/>
    <property type="match status" value="1"/>
</dbReference>
<dbReference type="PROSITE" id="PS51462">
    <property type="entry name" value="NUDIX"/>
    <property type="match status" value="1"/>
</dbReference>
<dbReference type="PROSITE" id="PS00893">
    <property type="entry name" value="NUDIX_BOX"/>
    <property type="match status" value="1"/>
</dbReference>
<gene>
    <name evidence="1" type="primary">rppH</name>
    <name evidence="1" type="synonym">nudH</name>
    <name type="ordered locus">GDI3350</name>
    <name type="ordered locus">Gdia_3020</name>
</gene>
<protein>
    <recommendedName>
        <fullName evidence="1">RNA pyrophosphohydrolase</fullName>
        <ecNumber evidence="1">3.6.1.-</ecNumber>
    </recommendedName>
    <alternativeName>
        <fullName evidence="1">(Di)nucleoside polyphosphate hydrolase</fullName>
    </alternativeName>
</protein>
<accession>A9H3A6</accession>
<accession>B5ZIW0</accession>
<reference key="1">
    <citation type="journal article" date="2009" name="BMC Genomics">
        <title>Complete genome sequence of the sugarcane nitrogen-fixing endophyte Gluconacetobacter diazotrophicus Pal5.</title>
        <authorList>
            <person name="Bertalan M."/>
            <person name="Albano R."/>
            <person name="de Padua V."/>
            <person name="Rouws L."/>
            <person name="Rojas C."/>
            <person name="Hemerly A."/>
            <person name="Teixeira K."/>
            <person name="Schwab S."/>
            <person name="Araujo J."/>
            <person name="Oliveira A."/>
            <person name="Franca L."/>
            <person name="Magalhaes V."/>
            <person name="Alqueres S."/>
            <person name="Cardoso A."/>
            <person name="Almeida W."/>
            <person name="Loureiro M.M."/>
            <person name="Nogueira E."/>
            <person name="Cidade D."/>
            <person name="Oliveira D."/>
            <person name="Simao T."/>
            <person name="Macedo J."/>
            <person name="Valadao A."/>
            <person name="Dreschsel M."/>
            <person name="Freitas F."/>
            <person name="Vidal M."/>
            <person name="Guedes H."/>
            <person name="Rodrigues E."/>
            <person name="Meneses C."/>
            <person name="Brioso P."/>
            <person name="Pozzer L."/>
            <person name="Figueiredo D."/>
            <person name="Montano H."/>
            <person name="Junior J."/>
            <person name="de Souza Filho G."/>
            <person name="Martin Quintana Flores V."/>
            <person name="Ferreira B."/>
            <person name="Branco A."/>
            <person name="Gonzalez P."/>
            <person name="Guillobel H."/>
            <person name="Lemos M."/>
            <person name="Seibel L."/>
            <person name="Macedo J."/>
            <person name="Alves-Ferreira M."/>
            <person name="Sachetto-Martins G."/>
            <person name="Coelho A."/>
            <person name="Santos E."/>
            <person name="Amaral G."/>
            <person name="Neves A."/>
            <person name="Pacheco A.B."/>
            <person name="Carvalho D."/>
            <person name="Lery L."/>
            <person name="Bisch P."/>
            <person name="Rossle S.C."/>
            <person name="Urmenyi T."/>
            <person name="Rael Pereira A."/>
            <person name="Silva R."/>
            <person name="Rondinelli E."/>
            <person name="von Kruger W."/>
            <person name="Martins O."/>
            <person name="Baldani J.I."/>
            <person name="Ferreira P.C."/>
        </authorList>
    </citation>
    <scope>NUCLEOTIDE SEQUENCE [LARGE SCALE GENOMIC DNA]</scope>
    <source>
        <strain>ATCC 49037 / DSM 5601 / CCUG 37298 / CIP 103539 / LMG 7603 / PAl5</strain>
    </source>
</reference>
<reference key="2">
    <citation type="journal article" date="2010" name="Stand. Genomic Sci.">
        <title>Two genome sequences of the same bacterial strain, Gluconacetobacter diazotrophicus PAl 5, suggest a new standard in genome sequence submission.</title>
        <authorList>
            <person name="Giongo A."/>
            <person name="Tyler H.L."/>
            <person name="Zipperer U.N."/>
            <person name="Triplett E.W."/>
        </authorList>
    </citation>
    <scope>NUCLEOTIDE SEQUENCE [LARGE SCALE GENOMIC DNA]</scope>
    <source>
        <strain>ATCC 49037 / DSM 5601 / CCUG 37298 / CIP 103539 / LMG 7603 / PAl5</strain>
    </source>
</reference>
<keyword id="KW-0378">Hydrolase</keyword>
<keyword id="KW-1185">Reference proteome</keyword>
<feature type="chain" id="PRO_1000078964" description="RNA pyrophosphohydrolase">
    <location>
        <begin position="1"/>
        <end position="167"/>
    </location>
</feature>
<feature type="domain" description="Nudix hydrolase" evidence="1">
    <location>
        <begin position="8"/>
        <end position="158"/>
    </location>
</feature>
<feature type="short sequence motif" description="Nudix box">
    <location>
        <begin position="49"/>
        <end position="70"/>
    </location>
</feature>
<feature type="sequence conflict" description="In Ref. 2; ACI52750." evidence="2" ref="2">
    <original>D</original>
    <variation>T</variation>
    <location>
        <position position="6"/>
    </location>
</feature>
<feature type="sequence conflict" description="In Ref. 2; ACI52750." evidence="2" ref="2">
    <original>Q</original>
    <variation>R</variation>
    <location>
        <position position="21"/>
    </location>
</feature>
<feature type="sequence conflict" description="In Ref. 2; ACI52750." evidence="2" ref="2">
    <original>R</original>
    <variation>K</variation>
    <location>
        <position position="23"/>
    </location>
</feature>
<name>RPPH_GLUDA</name>
<organism>
    <name type="scientific">Gluconacetobacter diazotrophicus (strain ATCC 49037 / DSM 5601 / CCUG 37298 / CIP 103539 / LMG 7603 / PAl5)</name>
    <dbReference type="NCBI Taxonomy" id="272568"/>
    <lineage>
        <taxon>Bacteria</taxon>
        <taxon>Pseudomonadati</taxon>
        <taxon>Pseudomonadota</taxon>
        <taxon>Alphaproteobacteria</taxon>
        <taxon>Acetobacterales</taxon>
        <taxon>Acetobacteraceae</taxon>
        <taxon>Gluconacetobacter</taxon>
    </lineage>
</organism>
<proteinExistence type="inferred from homology"/>
<evidence type="ECO:0000255" key="1">
    <source>
        <dbReference type="HAMAP-Rule" id="MF_00298"/>
    </source>
</evidence>
<evidence type="ECO:0000305" key="2"/>
<sequence>MTDAADLPYRRNVGAMLFNAQGRILIGRRTDQPGAGGPLDGGVWQCPQGGIDADEDPEEAVLRELREEIGTDRAVIMGARPDWLTYDLPAALIGRALGGRYRGQTQKWFALRFTGQDSDIRLDDQQPPEFDAWQWIDLPSLPERNVGFKRDIYRTLVRDFARFSQPA</sequence>
<comment type="function">
    <text evidence="1">Accelerates the degradation of transcripts by removing pyrophosphate from the 5'-end of triphosphorylated RNA, leading to a more labile monophosphorylated state that can stimulate subsequent ribonuclease cleavage.</text>
</comment>
<comment type="cofactor">
    <cofactor evidence="1">
        <name>a divalent metal cation</name>
        <dbReference type="ChEBI" id="CHEBI:60240"/>
    </cofactor>
</comment>
<comment type="similarity">
    <text evidence="1">Belongs to the Nudix hydrolase family. RppH subfamily.</text>
</comment>